<gene>
    <name evidence="1" type="primary">mnmA</name>
    <name type="synonym">trmU</name>
    <name type="ordered locus">CAB345</name>
</gene>
<accession>Q5L6D1</accession>
<dbReference type="EC" id="2.8.1.13" evidence="1"/>
<dbReference type="EMBL" id="CR848038">
    <property type="protein sequence ID" value="CAH63795.1"/>
    <property type="molecule type" value="Genomic_DNA"/>
</dbReference>
<dbReference type="RefSeq" id="WP_011097004.1">
    <property type="nucleotide sequence ID" value="NC_004552.2"/>
</dbReference>
<dbReference type="SMR" id="Q5L6D1"/>
<dbReference type="KEGG" id="cab:CAB345"/>
<dbReference type="eggNOG" id="COG0482">
    <property type="taxonomic scope" value="Bacteria"/>
</dbReference>
<dbReference type="HOGENOM" id="CLU_035188_1_0_0"/>
<dbReference type="OrthoDB" id="9800696at2"/>
<dbReference type="Proteomes" id="UP000001012">
    <property type="component" value="Chromosome"/>
</dbReference>
<dbReference type="GO" id="GO:0005737">
    <property type="term" value="C:cytoplasm"/>
    <property type="evidence" value="ECO:0007669"/>
    <property type="project" value="UniProtKB-SubCell"/>
</dbReference>
<dbReference type="GO" id="GO:0005524">
    <property type="term" value="F:ATP binding"/>
    <property type="evidence" value="ECO:0007669"/>
    <property type="project" value="UniProtKB-KW"/>
</dbReference>
<dbReference type="GO" id="GO:0000049">
    <property type="term" value="F:tRNA binding"/>
    <property type="evidence" value="ECO:0007669"/>
    <property type="project" value="UniProtKB-KW"/>
</dbReference>
<dbReference type="GO" id="GO:0103016">
    <property type="term" value="F:tRNA-uridine 2-sulfurtransferase activity"/>
    <property type="evidence" value="ECO:0007669"/>
    <property type="project" value="UniProtKB-EC"/>
</dbReference>
<dbReference type="GO" id="GO:0002143">
    <property type="term" value="P:tRNA wobble position uridine thiolation"/>
    <property type="evidence" value="ECO:0007669"/>
    <property type="project" value="TreeGrafter"/>
</dbReference>
<dbReference type="CDD" id="cd01998">
    <property type="entry name" value="MnmA_TRMU-like"/>
    <property type="match status" value="1"/>
</dbReference>
<dbReference type="FunFam" id="2.30.30.280:FF:000001">
    <property type="entry name" value="tRNA-specific 2-thiouridylase MnmA"/>
    <property type="match status" value="1"/>
</dbReference>
<dbReference type="FunFam" id="2.40.30.10:FF:000023">
    <property type="entry name" value="tRNA-specific 2-thiouridylase MnmA"/>
    <property type="match status" value="1"/>
</dbReference>
<dbReference type="FunFam" id="3.40.50.620:FF:000115">
    <property type="entry name" value="tRNA-specific 2-thiouridylase MnmA"/>
    <property type="match status" value="1"/>
</dbReference>
<dbReference type="Gene3D" id="2.30.30.280">
    <property type="entry name" value="Adenine nucleotide alpha hydrolases-like domains"/>
    <property type="match status" value="1"/>
</dbReference>
<dbReference type="Gene3D" id="3.40.50.620">
    <property type="entry name" value="HUPs"/>
    <property type="match status" value="1"/>
</dbReference>
<dbReference type="Gene3D" id="2.40.30.10">
    <property type="entry name" value="Translation factors"/>
    <property type="match status" value="1"/>
</dbReference>
<dbReference type="HAMAP" id="MF_00144">
    <property type="entry name" value="tRNA_thiouridyl_MnmA"/>
    <property type="match status" value="1"/>
</dbReference>
<dbReference type="InterPro" id="IPR004506">
    <property type="entry name" value="MnmA-like"/>
</dbReference>
<dbReference type="InterPro" id="IPR046885">
    <property type="entry name" value="MnmA-like_C"/>
</dbReference>
<dbReference type="InterPro" id="IPR046884">
    <property type="entry name" value="MnmA-like_central"/>
</dbReference>
<dbReference type="InterPro" id="IPR023382">
    <property type="entry name" value="MnmA-like_central_sf"/>
</dbReference>
<dbReference type="InterPro" id="IPR014729">
    <property type="entry name" value="Rossmann-like_a/b/a_fold"/>
</dbReference>
<dbReference type="NCBIfam" id="NF001138">
    <property type="entry name" value="PRK00143.1"/>
    <property type="match status" value="1"/>
</dbReference>
<dbReference type="NCBIfam" id="TIGR00420">
    <property type="entry name" value="trmU"/>
    <property type="match status" value="1"/>
</dbReference>
<dbReference type="PANTHER" id="PTHR11933:SF5">
    <property type="entry name" value="MITOCHONDRIAL TRNA-SPECIFIC 2-THIOURIDYLASE 1"/>
    <property type="match status" value="1"/>
</dbReference>
<dbReference type="PANTHER" id="PTHR11933">
    <property type="entry name" value="TRNA 5-METHYLAMINOMETHYL-2-THIOURIDYLATE -METHYLTRANSFERASE"/>
    <property type="match status" value="1"/>
</dbReference>
<dbReference type="Pfam" id="PF03054">
    <property type="entry name" value="tRNA_Me_trans"/>
    <property type="match status" value="1"/>
</dbReference>
<dbReference type="Pfam" id="PF20258">
    <property type="entry name" value="tRNA_Me_trans_C"/>
    <property type="match status" value="1"/>
</dbReference>
<dbReference type="Pfam" id="PF20259">
    <property type="entry name" value="tRNA_Me_trans_M"/>
    <property type="match status" value="1"/>
</dbReference>
<dbReference type="SUPFAM" id="SSF52402">
    <property type="entry name" value="Adenine nucleotide alpha hydrolases-like"/>
    <property type="match status" value="1"/>
</dbReference>
<reference key="1">
    <citation type="journal article" date="2005" name="Genome Res.">
        <title>The Chlamydophila abortus genome sequence reveals an array of variable proteins that contribute to interspecies variation.</title>
        <authorList>
            <person name="Thomson N.R."/>
            <person name="Yeats C."/>
            <person name="Bell K."/>
            <person name="Holden M.T.G."/>
            <person name="Bentley S.D."/>
            <person name="Livingstone M."/>
            <person name="Cerdeno-Tarraga A.-M."/>
            <person name="Harris B."/>
            <person name="Doggett J."/>
            <person name="Ormond D."/>
            <person name="Mungall K."/>
            <person name="Clarke K."/>
            <person name="Feltwell T."/>
            <person name="Hance Z."/>
            <person name="Sanders M."/>
            <person name="Quail M.A."/>
            <person name="Price C."/>
            <person name="Barrell B.G."/>
            <person name="Parkhill J."/>
            <person name="Longbottom D."/>
        </authorList>
    </citation>
    <scope>NUCLEOTIDE SEQUENCE [LARGE SCALE GENOMIC DNA]</scope>
    <source>
        <strain>DSM 27085 / S26/3</strain>
    </source>
</reference>
<organism>
    <name type="scientific">Chlamydia abortus (strain DSM 27085 / S26/3)</name>
    <name type="common">Chlamydophila abortus</name>
    <dbReference type="NCBI Taxonomy" id="218497"/>
    <lineage>
        <taxon>Bacteria</taxon>
        <taxon>Pseudomonadati</taxon>
        <taxon>Chlamydiota</taxon>
        <taxon>Chlamydiia</taxon>
        <taxon>Chlamydiales</taxon>
        <taxon>Chlamydiaceae</taxon>
        <taxon>Chlamydia/Chlamydophila group</taxon>
        <taxon>Chlamydia</taxon>
    </lineage>
</organism>
<evidence type="ECO:0000255" key="1">
    <source>
        <dbReference type="HAMAP-Rule" id="MF_00144"/>
    </source>
</evidence>
<keyword id="KW-0067">ATP-binding</keyword>
<keyword id="KW-0963">Cytoplasm</keyword>
<keyword id="KW-1015">Disulfide bond</keyword>
<keyword id="KW-0547">Nucleotide-binding</keyword>
<keyword id="KW-0694">RNA-binding</keyword>
<keyword id="KW-0808">Transferase</keyword>
<keyword id="KW-0819">tRNA processing</keyword>
<keyword id="KW-0820">tRNA-binding</keyword>
<name>MNMA_CHLAB</name>
<comment type="function">
    <text evidence="1">Catalyzes the 2-thiolation of uridine at the wobble position (U34) of tRNA, leading to the formation of s(2)U34.</text>
</comment>
<comment type="catalytic activity">
    <reaction evidence="1">
        <text>S-sulfanyl-L-cysteinyl-[protein] + uridine(34) in tRNA + AH2 + ATP = 2-thiouridine(34) in tRNA + L-cysteinyl-[protein] + A + AMP + diphosphate + H(+)</text>
        <dbReference type="Rhea" id="RHEA:47032"/>
        <dbReference type="Rhea" id="RHEA-COMP:10131"/>
        <dbReference type="Rhea" id="RHEA-COMP:11726"/>
        <dbReference type="Rhea" id="RHEA-COMP:11727"/>
        <dbReference type="Rhea" id="RHEA-COMP:11728"/>
        <dbReference type="ChEBI" id="CHEBI:13193"/>
        <dbReference type="ChEBI" id="CHEBI:15378"/>
        <dbReference type="ChEBI" id="CHEBI:17499"/>
        <dbReference type="ChEBI" id="CHEBI:29950"/>
        <dbReference type="ChEBI" id="CHEBI:30616"/>
        <dbReference type="ChEBI" id="CHEBI:33019"/>
        <dbReference type="ChEBI" id="CHEBI:61963"/>
        <dbReference type="ChEBI" id="CHEBI:65315"/>
        <dbReference type="ChEBI" id="CHEBI:87170"/>
        <dbReference type="ChEBI" id="CHEBI:456215"/>
        <dbReference type="EC" id="2.8.1.13"/>
    </reaction>
</comment>
<comment type="subcellular location">
    <subcellularLocation>
        <location evidence="1">Cytoplasm</location>
    </subcellularLocation>
</comment>
<comment type="similarity">
    <text evidence="1">Belongs to the MnmA/TRMU family.</text>
</comment>
<feature type="chain" id="PRO_0000121621" description="tRNA-specific 2-thiouridylase MnmA">
    <location>
        <begin position="1"/>
        <end position="362"/>
    </location>
</feature>
<feature type="region of interest" description="Interaction with target base in tRNA" evidence="1">
    <location>
        <begin position="95"/>
        <end position="97"/>
    </location>
</feature>
<feature type="region of interest" description="Interaction with tRNA" evidence="1">
    <location>
        <begin position="146"/>
        <end position="148"/>
    </location>
</feature>
<feature type="region of interest" description="Interaction with tRNA" evidence="1">
    <location>
        <begin position="303"/>
        <end position="304"/>
    </location>
</feature>
<feature type="active site" description="Nucleophile" evidence="1">
    <location>
        <position position="100"/>
    </location>
</feature>
<feature type="active site" description="Cysteine persulfide intermediate" evidence="1">
    <location>
        <position position="196"/>
    </location>
</feature>
<feature type="binding site" evidence="1">
    <location>
        <begin position="8"/>
        <end position="15"/>
    </location>
    <ligand>
        <name>ATP</name>
        <dbReference type="ChEBI" id="CHEBI:30616"/>
    </ligand>
</feature>
<feature type="binding site" evidence="1">
    <location>
        <position position="35"/>
    </location>
    <ligand>
        <name>ATP</name>
        <dbReference type="ChEBI" id="CHEBI:30616"/>
    </ligand>
</feature>
<feature type="binding site" evidence="1">
    <location>
        <position position="124"/>
    </location>
    <ligand>
        <name>ATP</name>
        <dbReference type="ChEBI" id="CHEBI:30616"/>
    </ligand>
</feature>
<feature type="site" description="Interaction with tRNA" evidence="1">
    <location>
        <position position="125"/>
    </location>
</feature>
<feature type="site" description="Interaction with tRNA" evidence="1">
    <location>
        <position position="337"/>
    </location>
</feature>
<feature type="disulfide bond" description="Alternate" evidence="1">
    <location>
        <begin position="100"/>
        <end position="196"/>
    </location>
</feature>
<proteinExistence type="inferred from homology"/>
<sequence>MNKTVVVAMSGGVDSSVVAYLLKKYTSYRVLGIFMKNWEEEDSNGLCSTAKDYEDVERVAEQLDIPYYTVSFAREYRERVFSRFLKEYSQGYTPNPDVLCNREIKFDLLQKKVVELGGDFLATGHYCRLDVKSQRVGLLRGKDPHKDQSYFLCGTHPESLKNVLFPLGDMTKREVRSIAAQAGLATAQKRDSTGICFIGKRPFKSFLEQFVPNVEGEIIDYDSQKIVGNHEGAHYYTIGQRRGLDIGGSEKPCYVVGKDMEKNIVYIVRGEDHPLLYQQELTAKELNWFVSPESITRCSAKVRYRSPDEECEILHTGTQDTVRVRFTSPVKAITPGQTIAFYDGERCLGGGIIEVAMTPHSV</sequence>
<protein>
    <recommendedName>
        <fullName evidence="1">tRNA-specific 2-thiouridylase MnmA</fullName>
        <ecNumber evidence="1">2.8.1.13</ecNumber>
    </recommendedName>
</protein>